<protein>
    <recommendedName>
        <fullName evidence="1">DNA-directed RNA polymerase subunit beta</fullName>
        <ecNumber evidence="1">2.7.7.6</ecNumber>
    </recommendedName>
    <alternativeName>
        <fullName evidence="1">PEP</fullName>
    </alternativeName>
    <alternativeName>
        <fullName evidence="1">Plastid-encoded RNA polymerase subunit beta</fullName>
        <shortName evidence="1">RNA polymerase subunit beta</shortName>
    </alternativeName>
</protein>
<accession>Q20EX1</accession>
<sequence length="1416" mass="158293">MNIYLRQNSFLVPDFIAVQRNSFSQFLESGLIQEISKRNPITNSTKELELCFYPQYYKLSPPELNAKQSILKNKTYSCRLYIPVKLTNKRTKTLKLQWVVLGNLPLMTKRGHFIINGSPRVIINQMVRSPGVYFKEVSHADQKLTYYADLIAYRGAWLRIELDKKADIWARMKKTPKLPMLILLQALGLNLPTILKSLNYPKFFENLGHDGNFMKQLKKGRVSSRSSSQELSGSFNLSEDVSLRLDDSSKNMGAENVQRAPLQKSTKKATLFGDFSRSSVYCKTQEEALWALYALTHPLKNPDEVTANLGKSFLYRKFMNSRVYDLSPLGRLRLNQKLNLSVNENITTITAQDLLFITNTLINLNYGVGKVDDIDNLKNRRIRTAGELVQNQFGIGLLRLEKIIREKLKQQQTKLSIGSLINTKPINGALREFFGSSPLSQFMDQTNPLAEITHKRRLSSLGPGGVNRETAGMAIRGIHPTHYGRICPIETPEGQNAGLVNSLTIYSRVNPYGFIETPFYKVVKGQVQNSTRPIFFSAYQEEKKLLAPGDIYANKLKYLPKSELPIRKLAEFTRTTREKIDYISVSPLQMISIATSLIPFLEHDDANRALMGSNMQRQAVPLMTAEAPVVGTGLECRVASDSGHVLQAKKSGFVTYSSAEKITILSPVDSTPAVPKLSKGNNSPQHFHESVGGSCKESQSLQAAAEGYLSGVASSSSSKFTGSSFSTISALNDGVLRRALTQKVLTTGTNCSSMLKNQRFFVEPKAQLYTGAQTPVGRVETILQPNHAEGYLSEVETIQQTQNKLPLQVRFGVEAPKSSFDSEATKISSTLNSIPQHPVLGEDSPSKQVGWALKDPQIQTMLKPKWHHSAQTMSRENWYQNLKGQNVKTFTQVESGRLVTKPTNTKMPMSSLAGTANSKKTGEALYKLASSESATKSMDFSTKTQLKPITYELQKLFRSNQDTSIMHRPVVREGEWVNRGDLLADNSTTVGGELSLGKNLLLAYMPWEGYNFEDAILISERLVSDDAYTSLHIERYEVEIRETKFGLEQITSQIPDEGKLSHLDHFGIAKPGTWVEEGDILIGKVAPMPQKNLSRYEKLLYDVVGKKISTTRDTSLRVPRGVSGRVIHVEILNAENLPPEFVFEGPSRVNLYIAEKRKIHVGDKMAGRHGNKGIISNILPRQDMPYLPDGTPLDMVLNPLGVPSRMNVGQIYECLLGLAGRYLGQKFKVRPFDEIYGPQTSRSLVYSKLYEARLRTGQRWLFNPASPGKTRLFDGRTGECFSQPVTVGQAYMLKLIHLVDEKIHARSIGPYSLVTQQPLRGRSKHGGQRLGEMEVWALEGFGAAYTLQELLTVKSDDIKGREQVMESIQKNKTISLGTPESFKVLIRELQSLCLDVGVYAVDGSGKIKQVDTMKLP</sequence>
<gene>
    <name evidence="1" type="primary">rpoB</name>
</gene>
<dbReference type="EC" id="2.7.7.6" evidence="1"/>
<dbReference type="EMBL" id="DQ291132">
    <property type="protein sequence ID" value="ABB81942.1"/>
    <property type="molecule type" value="Genomic_DNA"/>
</dbReference>
<dbReference type="RefSeq" id="YP_635874.1">
    <property type="nucleotide sequence ID" value="NC_008099.1"/>
</dbReference>
<dbReference type="SMR" id="Q20EX1"/>
<dbReference type="GeneID" id="4100134"/>
<dbReference type="GO" id="GO:0009507">
    <property type="term" value="C:chloroplast"/>
    <property type="evidence" value="ECO:0007669"/>
    <property type="project" value="UniProtKB-SubCell"/>
</dbReference>
<dbReference type="GO" id="GO:0000428">
    <property type="term" value="C:DNA-directed RNA polymerase complex"/>
    <property type="evidence" value="ECO:0007669"/>
    <property type="project" value="UniProtKB-KW"/>
</dbReference>
<dbReference type="GO" id="GO:0005739">
    <property type="term" value="C:mitochondrion"/>
    <property type="evidence" value="ECO:0007669"/>
    <property type="project" value="GOC"/>
</dbReference>
<dbReference type="GO" id="GO:0003677">
    <property type="term" value="F:DNA binding"/>
    <property type="evidence" value="ECO:0007669"/>
    <property type="project" value="UniProtKB-UniRule"/>
</dbReference>
<dbReference type="GO" id="GO:0003899">
    <property type="term" value="F:DNA-directed RNA polymerase activity"/>
    <property type="evidence" value="ECO:0007669"/>
    <property type="project" value="UniProtKB-UniRule"/>
</dbReference>
<dbReference type="GO" id="GO:0032549">
    <property type="term" value="F:ribonucleoside binding"/>
    <property type="evidence" value="ECO:0007669"/>
    <property type="project" value="InterPro"/>
</dbReference>
<dbReference type="GO" id="GO:0006351">
    <property type="term" value="P:DNA-templated transcription"/>
    <property type="evidence" value="ECO:0007669"/>
    <property type="project" value="UniProtKB-UniRule"/>
</dbReference>
<dbReference type="CDD" id="cd00653">
    <property type="entry name" value="RNA_pol_B_RPB2"/>
    <property type="match status" value="1"/>
</dbReference>
<dbReference type="Gene3D" id="2.40.50.100">
    <property type="match status" value="2"/>
</dbReference>
<dbReference type="Gene3D" id="2.40.50.150">
    <property type="match status" value="1"/>
</dbReference>
<dbReference type="Gene3D" id="3.90.1100.10">
    <property type="match status" value="2"/>
</dbReference>
<dbReference type="Gene3D" id="2.30.150.10">
    <property type="entry name" value="DNA-directed RNA polymerase, beta subunit, external 1 domain"/>
    <property type="match status" value="1"/>
</dbReference>
<dbReference type="Gene3D" id="2.40.270.10">
    <property type="entry name" value="DNA-directed RNA polymerase, subunit 2, domain 6"/>
    <property type="match status" value="2"/>
</dbReference>
<dbReference type="Gene3D" id="3.90.1800.10">
    <property type="entry name" value="RNA polymerase alpha subunit dimerisation domain"/>
    <property type="match status" value="1"/>
</dbReference>
<dbReference type="Gene3D" id="3.90.1110.10">
    <property type="entry name" value="RNA polymerase Rpb2, domain 2"/>
    <property type="match status" value="2"/>
</dbReference>
<dbReference type="HAMAP" id="MF_01321">
    <property type="entry name" value="RNApol_bact_RpoB"/>
    <property type="match status" value="1"/>
</dbReference>
<dbReference type="InterPro" id="IPR042107">
    <property type="entry name" value="DNA-dir_RNA_pol_bsu_ext_1_sf"/>
</dbReference>
<dbReference type="InterPro" id="IPR019462">
    <property type="entry name" value="DNA-dir_RNA_pol_bsu_external_1"/>
</dbReference>
<dbReference type="InterPro" id="IPR015712">
    <property type="entry name" value="DNA-dir_RNA_pol_su2"/>
</dbReference>
<dbReference type="InterPro" id="IPR007120">
    <property type="entry name" value="DNA-dir_RNAP_su2_dom"/>
</dbReference>
<dbReference type="InterPro" id="IPR037033">
    <property type="entry name" value="DNA-dir_RNAP_su2_hyb_sf"/>
</dbReference>
<dbReference type="InterPro" id="IPR010243">
    <property type="entry name" value="RNA_pol_bsu_bac"/>
</dbReference>
<dbReference type="InterPro" id="IPR007121">
    <property type="entry name" value="RNA_pol_bsu_CS"/>
</dbReference>
<dbReference type="InterPro" id="IPR007644">
    <property type="entry name" value="RNA_pol_bsu_protrusion"/>
</dbReference>
<dbReference type="InterPro" id="IPR007642">
    <property type="entry name" value="RNA_pol_Rpb2_2"/>
</dbReference>
<dbReference type="InterPro" id="IPR037034">
    <property type="entry name" value="RNA_pol_Rpb2_2_sf"/>
</dbReference>
<dbReference type="InterPro" id="IPR007645">
    <property type="entry name" value="RNA_pol_Rpb2_3"/>
</dbReference>
<dbReference type="InterPro" id="IPR007641">
    <property type="entry name" value="RNA_pol_Rpb2_7"/>
</dbReference>
<dbReference type="InterPro" id="IPR014724">
    <property type="entry name" value="RNA_pol_RPB2_OB-fold"/>
</dbReference>
<dbReference type="PANTHER" id="PTHR20856">
    <property type="entry name" value="DNA-DIRECTED RNA POLYMERASE I SUBUNIT 2"/>
    <property type="match status" value="1"/>
</dbReference>
<dbReference type="Pfam" id="PF04563">
    <property type="entry name" value="RNA_pol_Rpb2_1"/>
    <property type="match status" value="1"/>
</dbReference>
<dbReference type="Pfam" id="PF04561">
    <property type="entry name" value="RNA_pol_Rpb2_2"/>
    <property type="match status" value="2"/>
</dbReference>
<dbReference type="Pfam" id="PF04565">
    <property type="entry name" value="RNA_pol_Rpb2_3"/>
    <property type="match status" value="1"/>
</dbReference>
<dbReference type="Pfam" id="PF10385">
    <property type="entry name" value="RNA_pol_Rpb2_45"/>
    <property type="match status" value="1"/>
</dbReference>
<dbReference type="Pfam" id="PF00562">
    <property type="entry name" value="RNA_pol_Rpb2_6"/>
    <property type="match status" value="1"/>
</dbReference>
<dbReference type="Pfam" id="PF04560">
    <property type="entry name" value="RNA_pol_Rpb2_7"/>
    <property type="match status" value="1"/>
</dbReference>
<dbReference type="SUPFAM" id="SSF64484">
    <property type="entry name" value="beta and beta-prime subunits of DNA dependent RNA-polymerase"/>
    <property type="match status" value="1"/>
</dbReference>
<dbReference type="PROSITE" id="PS01166">
    <property type="entry name" value="RNA_POL_BETA"/>
    <property type="match status" value="1"/>
</dbReference>
<organism>
    <name type="scientific">Oltmannsiellopsis viridis</name>
    <name type="common">Marine flagellate</name>
    <name type="synonym">Oltmannsiella viridis</name>
    <dbReference type="NCBI Taxonomy" id="51324"/>
    <lineage>
        <taxon>Eukaryota</taxon>
        <taxon>Viridiplantae</taxon>
        <taxon>Chlorophyta</taxon>
        <taxon>Ulvophyceae</taxon>
        <taxon>Oltmannsiellopsidales</taxon>
        <taxon>Oltmannsiellopsidaceae</taxon>
        <taxon>Oltmannsiellopsis</taxon>
    </lineage>
</organism>
<name>RPOB_OLTVI</name>
<evidence type="ECO:0000255" key="1">
    <source>
        <dbReference type="HAMAP-Rule" id="MF_01321"/>
    </source>
</evidence>
<keyword id="KW-0150">Chloroplast</keyword>
<keyword id="KW-0240">DNA-directed RNA polymerase</keyword>
<keyword id="KW-0548">Nucleotidyltransferase</keyword>
<keyword id="KW-0934">Plastid</keyword>
<keyword id="KW-0804">Transcription</keyword>
<keyword id="KW-0808">Transferase</keyword>
<proteinExistence type="inferred from homology"/>
<reference key="1">
    <citation type="journal article" date="2006" name="BMC Biol.">
        <title>The complete chloroplast DNA sequence of the green alga Oltmannsiellopsis viridis reveals a distinctive quadripartite architecture in the chloroplast genome of early diverging ulvophytes.</title>
        <authorList>
            <person name="Pombert J.-F."/>
            <person name="Lemieux C."/>
            <person name="Turmel M."/>
        </authorList>
    </citation>
    <scope>NUCLEOTIDE SEQUENCE [LARGE SCALE GENOMIC DNA]</scope>
</reference>
<geneLocation type="chloroplast"/>
<comment type="function">
    <text evidence="1">DNA-dependent RNA polymerase catalyzes the transcription of DNA into RNA using the four ribonucleoside triphosphates as substrates.</text>
</comment>
<comment type="catalytic activity">
    <reaction evidence="1">
        <text>RNA(n) + a ribonucleoside 5'-triphosphate = RNA(n+1) + diphosphate</text>
        <dbReference type="Rhea" id="RHEA:21248"/>
        <dbReference type="Rhea" id="RHEA-COMP:14527"/>
        <dbReference type="Rhea" id="RHEA-COMP:17342"/>
        <dbReference type="ChEBI" id="CHEBI:33019"/>
        <dbReference type="ChEBI" id="CHEBI:61557"/>
        <dbReference type="ChEBI" id="CHEBI:140395"/>
        <dbReference type="EC" id="2.7.7.6"/>
    </reaction>
</comment>
<comment type="subunit">
    <text evidence="1">In plastids the minimal PEP RNA polymerase catalytic core is composed of four subunits: alpha, beta, beta', and beta''. When a (nuclear-encoded) sigma factor is associated with the core the holoenzyme is formed, which can initiate transcription.</text>
</comment>
<comment type="subcellular location">
    <subcellularLocation>
        <location>Plastid</location>
        <location>Chloroplast</location>
    </subcellularLocation>
</comment>
<comment type="similarity">
    <text evidence="1">Belongs to the RNA polymerase beta chain family.</text>
</comment>
<feature type="chain" id="PRO_0000237327" description="DNA-directed RNA polymerase subunit beta">
    <location>
        <begin position="1"/>
        <end position="1416"/>
    </location>
</feature>